<geneLocation type="chloroplast"/>
<comment type="function">
    <text evidence="1">NDH shuttles electrons from NAD(P)H:plastoquinone, via FMN and iron-sulfur (Fe-S) centers, to quinones in the photosynthetic chain and possibly in a chloroplast respiratory chain. The immediate electron acceptor for the enzyme in this species is believed to be plastoquinone. Couples the redox reaction to proton translocation, and thus conserves the redox energy in a proton gradient.</text>
</comment>
<comment type="catalytic activity">
    <reaction evidence="1">
        <text>a plastoquinone + NADH + (n+1) H(+)(in) = a plastoquinol + NAD(+) + n H(+)(out)</text>
        <dbReference type="Rhea" id="RHEA:42608"/>
        <dbReference type="Rhea" id="RHEA-COMP:9561"/>
        <dbReference type="Rhea" id="RHEA-COMP:9562"/>
        <dbReference type="ChEBI" id="CHEBI:15378"/>
        <dbReference type="ChEBI" id="CHEBI:17757"/>
        <dbReference type="ChEBI" id="CHEBI:57540"/>
        <dbReference type="ChEBI" id="CHEBI:57945"/>
        <dbReference type="ChEBI" id="CHEBI:62192"/>
    </reaction>
</comment>
<comment type="catalytic activity">
    <reaction evidence="1">
        <text>a plastoquinone + NADPH + (n+1) H(+)(in) = a plastoquinol + NADP(+) + n H(+)(out)</text>
        <dbReference type="Rhea" id="RHEA:42612"/>
        <dbReference type="Rhea" id="RHEA-COMP:9561"/>
        <dbReference type="Rhea" id="RHEA-COMP:9562"/>
        <dbReference type="ChEBI" id="CHEBI:15378"/>
        <dbReference type="ChEBI" id="CHEBI:17757"/>
        <dbReference type="ChEBI" id="CHEBI:57783"/>
        <dbReference type="ChEBI" id="CHEBI:58349"/>
        <dbReference type="ChEBI" id="CHEBI:62192"/>
    </reaction>
</comment>
<comment type="subunit">
    <text evidence="1">NDH is composed of at least 16 different subunits, 5 of which are encoded in the nucleus.</text>
</comment>
<comment type="subcellular location">
    <subcellularLocation>
        <location evidence="1">Plastid</location>
        <location evidence="1">Chloroplast thylakoid membrane</location>
        <topology evidence="1">Peripheral membrane protein</topology>
        <orientation evidence="1">Stromal side</orientation>
    </subcellularLocation>
</comment>
<comment type="similarity">
    <text evidence="1">Belongs to the complex I 49 kDa subunit family.</text>
</comment>
<dbReference type="EC" id="7.1.1.-" evidence="1"/>
<dbReference type="EMBL" id="EU016706">
    <property type="protein sequence ID" value="ABU85149.1"/>
    <property type="molecule type" value="Genomic_DNA"/>
</dbReference>
<dbReference type="EMBL" id="EU273602">
    <property type="protein sequence ID" value="ABX38799.1"/>
    <property type="molecule type" value="Genomic_DNA"/>
</dbReference>
<dbReference type="RefSeq" id="YP_001586237.1">
    <property type="nucleotide sequence ID" value="NC_010093.1"/>
</dbReference>
<dbReference type="SMR" id="A9LYF6"/>
<dbReference type="GeneID" id="5777814"/>
<dbReference type="GO" id="GO:0009535">
    <property type="term" value="C:chloroplast thylakoid membrane"/>
    <property type="evidence" value="ECO:0007669"/>
    <property type="project" value="UniProtKB-SubCell"/>
</dbReference>
<dbReference type="GO" id="GO:0051287">
    <property type="term" value="F:NAD binding"/>
    <property type="evidence" value="ECO:0007669"/>
    <property type="project" value="InterPro"/>
</dbReference>
<dbReference type="GO" id="GO:0016655">
    <property type="term" value="F:oxidoreductase activity, acting on NAD(P)H, quinone or similar compound as acceptor"/>
    <property type="evidence" value="ECO:0007669"/>
    <property type="project" value="UniProtKB-UniRule"/>
</dbReference>
<dbReference type="GO" id="GO:0048038">
    <property type="term" value="F:quinone binding"/>
    <property type="evidence" value="ECO:0007669"/>
    <property type="project" value="UniProtKB-KW"/>
</dbReference>
<dbReference type="GO" id="GO:0019684">
    <property type="term" value="P:photosynthesis, light reaction"/>
    <property type="evidence" value="ECO:0007669"/>
    <property type="project" value="UniProtKB-UniRule"/>
</dbReference>
<dbReference type="FunFam" id="1.10.645.10:FF:000003">
    <property type="entry name" value="NAD(P)H-quinone oxidoreductase subunit H, chloroplastic"/>
    <property type="match status" value="1"/>
</dbReference>
<dbReference type="Gene3D" id="1.10.645.10">
    <property type="entry name" value="Cytochrome-c3 Hydrogenase, chain B"/>
    <property type="match status" value="1"/>
</dbReference>
<dbReference type="HAMAP" id="MF_01358">
    <property type="entry name" value="NDH1_NuoD"/>
    <property type="match status" value="1"/>
</dbReference>
<dbReference type="InterPro" id="IPR001135">
    <property type="entry name" value="NADH_Q_OxRdtase_suD"/>
</dbReference>
<dbReference type="InterPro" id="IPR014029">
    <property type="entry name" value="NADH_UbQ_OxRdtase_49kDa_CS"/>
</dbReference>
<dbReference type="InterPro" id="IPR022885">
    <property type="entry name" value="NDH1_su_D/H"/>
</dbReference>
<dbReference type="InterPro" id="IPR029014">
    <property type="entry name" value="NiFe-Hase_large"/>
</dbReference>
<dbReference type="NCBIfam" id="NF004739">
    <property type="entry name" value="PRK06075.1"/>
    <property type="match status" value="1"/>
</dbReference>
<dbReference type="NCBIfam" id="NF005649">
    <property type="entry name" value="PRK07415.1"/>
    <property type="match status" value="1"/>
</dbReference>
<dbReference type="PANTHER" id="PTHR11993:SF10">
    <property type="entry name" value="NADH DEHYDROGENASE [UBIQUINONE] IRON-SULFUR PROTEIN 2, MITOCHONDRIAL"/>
    <property type="match status" value="1"/>
</dbReference>
<dbReference type="PANTHER" id="PTHR11993">
    <property type="entry name" value="NADH-UBIQUINONE OXIDOREDUCTASE 49 KDA SUBUNIT"/>
    <property type="match status" value="1"/>
</dbReference>
<dbReference type="Pfam" id="PF00346">
    <property type="entry name" value="Complex1_49kDa"/>
    <property type="match status" value="1"/>
</dbReference>
<dbReference type="SUPFAM" id="SSF56762">
    <property type="entry name" value="HydB/Nqo4-like"/>
    <property type="match status" value="1"/>
</dbReference>
<dbReference type="PROSITE" id="PS00535">
    <property type="entry name" value="COMPLEX1_49K"/>
    <property type="match status" value="1"/>
</dbReference>
<evidence type="ECO:0000255" key="1">
    <source>
        <dbReference type="HAMAP-Rule" id="MF_01358"/>
    </source>
</evidence>
<keyword id="KW-0150">Chloroplast</keyword>
<keyword id="KW-0472">Membrane</keyword>
<keyword id="KW-0520">NAD</keyword>
<keyword id="KW-0521">NADP</keyword>
<keyword id="KW-0934">Plastid</keyword>
<keyword id="KW-0618">Plastoquinone</keyword>
<keyword id="KW-0874">Quinone</keyword>
<keyword id="KW-0793">Thylakoid</keyword>
<keyword id="KW-1278">Translocase</keyword>
<keyword id="KW-0813">Transport</keyword>
<feature type="chain" id="PRO_0000357958" description="NAD(P)H-quinone oxidoreductase subunit H, chloroplastic">
    <location>
        <begin position="1"/>
        <end position="393"/>
    </location>
</feature>
<gene>
    <name evidence="1" type="primary">ndhH</name>
</gene>
<name>NDHH_ACOCI</name>
<accession>A9LYF6</accession>
<accession>A9QAQ6</accession>
<organism>
    <name type="scientific">Acorus calamus var. americanus</name>
    <name type="common">American sweet flag</name>
    <name type="synonym">Acorus americanus</name>
    <dbReference type="NCBI Taxonomy" id="263995"/>
    <lineage>
        <taxon>Eukaryota</taxon>
        <taxon>Viridiplantae</taxon>
        <taxon>Streptophyta</taxon>
        <taxon>Embryophyta</taxon>
        <taxon>Tracheophyta</taxon>
        <taxon>Spermatophyta</taxon>
        <taxon>Magnoliopsida</taxon>
        <taxon>Liliopsida</taxon>
        <taxon>Acoraceae</taxon>
        <taxon>Acorus</taxon>
    </lineage>
</organism>
<protein>
    <recommendedName>
        <fullName evidence="1">NAD(P)H-quinone oxidoreductase subunit H, chloroplastic</fullName>
        <ecNumber evidence="1">7.1.1.-</ecNumber>
    </recommendedName>
    <alternativeName>
        <fullName>NAD(P)H dehydrogenase subunit H</fullName>
    </alternativeName>
    <alternativeName>
        <fullName evidence="1">NADH-plastoquinone oxidoreductase 49 kDa subunit</fullName>
    </alternativeName>
    <alternativeName>
        <fullName evidence="1">NADH-plastoquinone oxidoreductase subunit H</fullName>
    </alternativeName>
</protein>
<proteinExistence type="inferred from homology"/>
<reference key="1">
    <citation type="journal article" date="2007" name="Proc. Natl. Acad. Sci. U.S.A.">
        <title>Analysis of 81 genes from 64 plastid genomes resolves relationships in angiosperms and identifies genome-scale evolutionary patterns.</title>
        <authorList>
            <person name="Jansen R.K."/>
            <person name="Cai Z."/>
            <person name="Raubeson L.A."/>
            <person name="Daniell H."/>
            <person name="dePamphilis C.W."/>
            <person name="Leebens-Mack J."/>
            <person name="Muller K.F."/>
            <person name="Guisinger-Bellian M."/>
            <person name="Haberle R.C."/>
            <person name="Hansen A.K."/>
            <person name="Chumley T.W."/>
            <person name="Lee S.B."/>
            <person name="Peery R."/>
            <person name="McNeal J.R."/>
            <person name="Kuehl J.V."/>
            <person name="Boore J.L."/>
        </authorList>
    </citation>
    <scope>NUCLEOTIDE SEQUENCE [GENOMIC DNA]</scope>
</reference>
<reference key="2">
    <citation type="submission" date="2007-11" db="EMBL/GenBank/DDBJ databases">
        <title>The complete chloroplast genome of Acorus americanus.</title>
        <authorList>
            <person name="Peery R.M."/>
            <person name="Chumley T.W."/>
            <person name="Kuehl J.V."/>
            <person name="Boore J.L."/>
            <person name="Raubeson L.A."/>
        </authorList>
    </citation>
    <scope>NUCLEOTIDE SEQUENCE [LARGE SCALE GENOMIC DNA]</scope>
</reference>
<sequence>MTVPATRQDLMIVNMGPHHPSMHGVLRLIVTLDGEDVIDCEPILGYLHRGMEKIAENRTIIQYLPYVTRWDYLATMFTEAITVNGPEQLGNIQIPKRASYIRVIMLELSRIASHLLWLGPFMADIGAQTPFFYIFRERELIYDLFEAATGMRMMHNYFRIGGVAADLPYGWIDKCLDFCDYFLTGIVEYEKLITQNPIFLERVERVGIISGEEAINWGLSGPMLRASGIEWDLRKVDNYECYNEFDWEVQWQKEGDSLARYLVRISEMKESIKIIQQALEGIPGGPYENLEVRRFDKVKDSEWNDFEYRFISKKPSPTFELAKQELYVRVEAPKGELGIFLIGDNSVFPWRWKIRPPGFINLQILPQLVKRMKLADIMTILGSIDIIMGEVDR</sequence>